<feature type="chain" id="PRO_0000432830" description="Micrurotoxin 1" evidence="3">
    <location>
        <begin position="1"/>
        <end position="64"/>
    </location>
</feature>
<feature type="disulfide bond" evidence="2">
    <location>
        <begin position="3"/>
        <end position="24"/>
    </location>
</feature>
<feature type="disulfide bond" evidence="2">
    <location>
        <begin position="6"/>
        <end position="11"/>
    </location>
</feature>
<feature type="disulfide bond" evidence="2">
    <location>
        <begin position="17"/>
        <end position="41"/>
    </location>
</feature>
<feature type="disulfide bond" evidence="2">
    <location>
        <begin position="45"/>
        <end position="57"/>
    </location>
</feature>
<feature type="disulfide bond" evidence="2">
    <location>
        <begin position="58"/>
        <end position="63"/>
    </location>
</feature>
<evidence type="ECO:0000250" key="1">
    <source>
        <dbReference type="UniProtKB" id="C0HJR2"/>
    </source>
</evidence>
<evidence type="ECO:0000250" key="2">
    <source>
        <dbReference type="UniProtKB" id="P81783"/>
    </source>
</evidence>
<evidence type="ECO:0000269" key="3">
    <source>
    </source>
</evidence>
<evidence type="ECO:0000303" key="4">
    <source>
    </source>
</evidence>
<evidence type="ECO:0000305" key="5"/>
<evidence type="ECO:0000305" key="6">
    <source>
    </source>
</evidence>
<name>3NX1_MICMP</name>
<comment type="function">
    <text evidence="3">Allosteric modulator of the GABA(A) receptor (GABR), possibly increasing receptor affinity for the agonist, thus enhancing receptor opening and macroscopic desensitization. In vivo, intracerebroventricular injection into mice results in periods of reduced basal activity, followed by bursts of intense seizures and death.</text>
</comment>
<comment type="subcellular location">
    <subcellularLocation>
        <location evidence="3">Secreted</location>
    </subcellularLocation>
</comment>
<comment type="tissue specificity">
    <text evidence="6">Expressed by the venom gland.</text>
</comment>
<comment type="mass spectrometry" mass="7205.0" error="1.0" method="Electrospray" evidence="3"/>
<comment type="toxic dose">
    <text evidence="3">LD(50) is 0.013-0.027 mg/kg by intracerebroventricular injection into mice.</text>
</comment>
<comment type="miscellaneous">
    <text evidence="1">Negative results: does not bind to nicotinic acetylcholine receptors (nAChR), muscarinic acetylcholine receptors (mAChR), acetylcholinesterase (AChE) or to receptors for glycine and glutamate.</text>
</comment>
<comment type="similarity">
    <text evidence="5">Belongs to the three-finger toxin family. Ancestral subfamily.</text>
</comment>
<organism>
    <name type="scientific">Micrurus mipartitus</name>
    <name type="common">Red-tailed coral snake</name>
    <dbReference type="NCBI Taxonomy" id="430902"/>
    <lineage>
        <taxon>Eukaryota</taxon>
        <taxon>Metazoa</taxon>
        <taxon>Chordata</taxon>
        <taxon>Craniata</taxon>
        <taxon>Vertebrata</taxon>
        <taxon>Euteleostomi</taxon>
        <taxon>Lepidosauria</taxon>
        <taxon>Squamata</taxon>
        <taxon>Bifurcata</taxon>
        <taxon>Unidentata</taxon>
        <taxon>Episquamata</taxon>
        <taxon>Toxicofera</taxon>
        <taxon>Serpentes</taxon>
        <taxon>Colubroidea</taxon>
        <taxon>Elapidae</taxon>
        <taxon>Elapinae</taxon>
        <taxon>Micrurus</taxon>
    </lineage>
</organism>
<sequence length="64" mass="7215">LTCKTCPFTTCPNSESCPGGQSICYQRKWEEHRGERIERRCVANCPAFGSHDTSLLCCTRDNCN</sequence>
<proteinExistence type="evidence at protein level"/>
<protein>
    <recommendedName>
        <fullName evidence="4">Micrurotoxin 1</fullName>
        <shortName evidence="4">MmTX1</shortName>
    </recommendedName>
</protein>
<keyword id="KW-1265">Chloride channel impairing toxin</keyword>
<keyword id="KW-0903">Direct protein sequencing</keyword>
<keyword id="KW-1015">Disulfide bond</keyword>
<keyword id="KW-0872">Ion channel impairing toxin</keyword>
<keyword id="KW-0528">Neurotoxin</keyword>
<keyword id="KW-0964">Secreted</keyword>
<keyword id="KW-0800">Toxin</keyword>
<dbReference type="SMR" id="C0HJR1"/>
<dbReference type="GO" id="GO:0005576">
    <property type="term" value="C:extracellular region"/>
    <property type="evidence" value="ECO:0007669"/>
    <property type="project" value="UniProtKB-SubCell"/>
</dbReference>
<dbReference type="GO" id="GO:0099106">
    <property type="term" value="F:ion channel regulator activity"/>
    <property type="evidence" value="ECO:0007669"/>
    <property type="project" value="UniProtKB-KW"/>
</dbReference>
<dbReference type="GO" id="GO:0090729">
    <property type="term" value="F:toxin activity"/>
    <property type="evidence" value="ECO:0007669"/>
    <property type="project" value="UniProtKB-KW"/>
</dbReference>
<dbReference type="CDD" id="cd00206">
    <property type="entry name" value="TFP_snake_toxin"/>
    <property type="match status" value="1"/>
</dbReference>
<dbReference type="FunFam" id="2.10.60.10:FF:000024">
    <property type="entry name" value="Cytotoxin 1"/>
    <property type="match status" value="1"/>
</dbReference>
<dbReference type="Gene3D" id="2.10.60.10">
    <property type="entry name" value="CD59"/>
    <property type="match status" value="1"/>
</dbReference>
<dbReference type="InterPro" id="IPR003571">
    <property type="entry name" value="Snake_3FTx"/>
</dbReference>
<dbReference type="InterPro" id="IPR045860">
    <property type="entry name" value="Snake_toxin-like_sf"/>
</dbReference>
<dbReference type="InterPro" id="IPR054131">
    <property type="entry name" value="Toxin_cobra-type"/>
</dbReference>
<dbReference type="Pfam" id="PF21947">
    <property type="entry name" value="Toxin_cobra-type"/>
    <property type="match status" value="1"/>
</dbReference>
<dbReference type="SUPFAM" id="SSF57302">
    <property type="entry name" value="Snake toxin-like"/>
    <property type="match status" value="1"/>
</dbReference>
<reference key="1">
    <citation type="journal article" date="2015" name="Proc. Natl. Acad. Sci. U.S.A.">
        <title>MmTX1 and MmTX2 from coral snake venom potently modulate GABAA receptor activity.</title>
        <authorList>
            <person name="Rosso J.P."/>
            <person name="Schwarz J.R."/>
            <person name="Diaz-Bustamante M."/>
            <person name="Ceard B."/>
            <person name="Gutierrez J.M."/>
            <person name="Kneussel M."/>
            <person name="Pongs O."/>
            <person name="Bosmans F."/>
            <person name="Bougis P.E."/>
        </authorList>
    </citation>
    <scope>PROTEIN SEQUENCE</scope>
    <scope>FUNCTION</scope>
    <scope>SUBCELLULAR LOCATION</scope>
    <scope>DISULFIDE BOND</scope>
    <scope>MASS SPECTROMETRY</scope>
    <scope>TOXIC DOSE</scope>
    <scope>BIOASSAY</scope>
    <source>
        <tissue>Venom</tissue>
    </source>
</reference>
<accession>C0HJR1</accession>